<name>SUCC_NEIMF</name>
<organism>
    <name type="scientific">Neisseria meningitidis serogroup C / serotype 2a (strain ATCC 700532 / DSM 15464 / FAM18)</name>
    <dbReference type="NCBI Taxonomy" id="272831"/>
    <lineage>
        <taxon>Bacteria</taxon>
        <taxon>Pseudomonadati</taxon>
        <taxon>Pseudomonadota</taxon>
        <taxon>Betaproteobacteria</taxon>
        <taxon>Neisseriales</taxon>
        <taxon>Neisseriaceae</taxon>
        <taxon>Neisseria</taxon>
    </lineage>
</organism>
<keyword id="KW-0067">ATP-binding</keyword>
<keyword id="KW-0436">Ligase</keyword>
<keyword id="KW-0460">Magnesium</keyword>
<keyword id="KW-0479">Metal-binding</keyword>
<keyword id="KW-0547">Nucleotide-binding</keyword>
<keyword id="KW-0816">Tricarboxylic acid cycle</keyword>
<comment type="function">
    <text evidence="1">Succinyl-CoA synthetase functions in the citric acid cycle (TCA), coupling the hydrolysis of succinyl-CoA to the synthesis of either ATP or GTP and thus represents the only step of substrate-level phosphorylation in the TCA. The beta subunit provides nucleotide specificity of the enzyme and binds the substrate succinate, while the binding sites for coenzyme A and phosphate are found in the alpha subunit.</text>
</comment>
<comment type="catalytic activity">
    <reaction evidence="1">
        <text>succinate + ATP + CoA = succinyl-CoA + ADP + phosphate</text>
        <dbReference type="Rhea" id="RHEA:17661"/>
        <dbReference type="ChEBI" id="CHEBI:30031"/>
        <dbReference type="ChEBI" id="CHEBI:30616"/>
        <dbReference type="ChEBI" id="CHEBI:43474"/>
        <dbReference type="ChEBI" id="CHEBI:57287"/>
        <dbReference type="ChEBI" id="CHEBI:57292"/>
        <dbReference type="ChEBI" id="CHEBI:456216"/>
        <dbReference type="EC" id="6.2.1.5"/>
    </reaction>
    <physiologicalReaction direction="right-to-left" evidence="1">
        <dbReference type="Rhea" id="RHEA:17663"/>
    </physiologicalReaction>
</comment>
<comment type="catalytic activity">
    <reaction evidence="1">
        <text>GTP + succinate + CoA = succinyl-CoA + GDP + phosphate</text>
        <dbReference type="Rhea" id="RHEA:22120"/>
        <dbReference type="ChEBI" id="CHEBI:30031"/>
        <dbReference type="ChEBI" id="CHEBI:37565"/>
        <dbReference type="ChEBI" id="CHEBI:43474"/>
        <dbReference type="ChEBI" id="CHEBI:57287"/>
        <dbReference type="ChEBI" id="CHEBI:57292"/>
        <dbReference type="ChEBI" id="CHEBI:58189"/>
    </reaction>
    <physiologicalReaction direction="right-to-left" evidence="1">
        <dbReference type="Rhea" id="RHEA:22122"/>
    </physiologicalReaction>
</comment>
<comment type="cofactor">
    <cofactor evidence="1">
        <name>Mg(2+)</name>
        <dbReference type="ChEBI" id="CHEBI:18420"/>
    </cofactor>
    <text evidence="1">Binds 1 Mg(2+) ion per subunit.</text>
</comment>
<comment type="pathway">
    <text evidence="1">Carbohydrate metabolism; tricarboxylic acid cycle; succinate from succinyl-CoA (ligase route): step 1/1.</text>
</comment>
<comment type="subunit">
    <text evidence="1">Heterotetramer of two alpha and two beta subunits.</text>
</comment>
<comment type="similarity">
    <text evidence="1">Belongs to the succinate/malate CoA ligase beta subunit family.</text>
</comment>
<proteinExistence type="inferred from homology"/>
<sequence>MNLHEYQAKELLAGYGLPVQGGILAHNGEEAAAAYDKLGGKFAVVKAQVHAGGRGKAGGVKVVKSREEAKEVAESLIGTNLVTYQTDANGQPVNSVLVCEDMYPVQTELYLGAVVDRSTRRITFMASTEGGVEIEKVAAETPEKIFKVTVDPLVGLQPCQAREVAFQLGLKDKQINEFVKLMTGAYKAFVENDFALFEVNPLAVRENGALACVDGKIGIDSNALYRLPKIAELRDKSQENERELKASEFDLNYVALEGNIGCMVNGAGLAMATMDIIKLKGGQPANFLDVGGGATKDRVVEAFKLILEDKSVQGVLINIFGGIVRCDMIAEAIVAAVKEINVDVPVVVRLEGNNAELGAKILNESGLKLTSADGLNDAAEKIVAAVNA</sequence>
<reference key="1">
    <citation type="journal article" date="2007" name="PLoS Genet.">
        <title>Meningococcal genetic variation mechanisms viewed through comparative analysis of serogroup C strain FAM18.</title>
        <authorList>
            <person name="Bentley S.D."/>
            <person name="Vernikos G.S."/>
            <person name="Snyder L.A.S."/>
            <person name="Churcher C."/>
            <person name="Arrowsmith C."/>
            <person name="Chillingworth T."/>
            <person name="Cronin A."/>
            <person name="Davis P.H."/>
            <person name="Holroyd N.E."/>
            <person name="Jagels K."/>
            <person name="Maddison M."/>
            <person name="Moule S."/>
            <person name="Rabbinowitsch E."/>
            <person name="Sharp S."/>
            <person name="Unwin L."/>
            <person name="Whitehead S."/>
            <person name="Quail M.A."/>
            <person name="Achtman M."/>
            <person name="Barrell B.G."/>
            <person name="Saunders N.J."/>
            <person name="Parkhill J."/>
        </authorList>
    </citation>
    <scope>NUCLEOTIDE SEQUENCE [LARGE SCALE GENOMIC DNA]</scope>
    <source>
        <strain>ATCC 700532 / DSM 15464 / FAM18</strain>
    </source>
</reference>
<protein>
    <recommendedName>
        <fullName evidence="1">Succinate--CoA ligase [ADP-forming] subunit beta</fullName>
        <ecNumber evidence="1">6.2.1.5</ecNumber>
    </recommendedName>
    <alternativeName>
        <fullName evidence="1">Succinyl-CoA synthetase subunit beta</fullName>
        <shortName evidence="1">SCS-beta</shortName>
    </alternativeName>
</protein>
<feature type="chain" id="PRO_1000082139" description="Succinate--CoA ligase [ADP-forming] subunit beta">
    <location>
        <begin position="1"/>
        <end position="388"/>
    </location>
</feature>
<feature type="domain" description="ATP-grasp" evidence="1">
    <location>
        <begin position="9"/>
        <end position="245"/>
    </location>
</feature>
<feature type="binding site" evidence="1">
    <location>
        <position position="46"/>
    </location>
    <ligand>
        <name>ATP</name>
        <dbReference type="ChEBI" id="CHEBI:30616"/>
    </ligand>
</feature>
<feature type="binding site" evidence="1">
    <location>
        <begin position="53"/>
        <end position="55"/>
    </location>
    <ligand>
        <name>ATP</name>
        <dbReference type="ChEBI" id="CHEBI:30616"/>
    </ligand>
</feature>
<feature type="binding site" evidence="1">
    <location>
        <position position="100"/>
    </location>
    <ligand>
        <name>ATP</name>
        <dbReference type="ChEBI" id="CHEBI:30616"/>
    </ligand>
</feature>
<feature type="binding site" evidence="1">
    <location>
        <position position="103"/>
    </location>
    <ligand>
        <name>ATP</name>
        <dbReference type="ChEBI" id="CHEBI:30616"/>
    </ligand>
</feature>
<feature type="binding site" evidence="1">
    <location>
        <position position="108"/>
    </location>
    <ligand>
        <name>ATP</name>
        <dbReference type="ChEBI" id="CHEBI:30616"/>
    </ligand>
</feature>
<feature type="binding site" evidence="1">
    <location>
        <position position="200"/>
    </location>
    <ligand>
        <name>Mg(2+)</name>
        <dbReference type="ChEBI" id="CHEBI:18420"/>
    </ligand>
</feature>
<feature type="binding site" evidence="1">
    <location>
        <position position="214"/>
    </location>
    <ligand>
        <name>Mg(2+)</name>
        <dbReference type="ChEBI" id="CHEBI:18420"/>
    </ligand>
</feature>
<feature type="binding site" evidence="1">
    <location>
        <position position="265"/>
    </location>
    <ligand>
        <name>substrate</name>
        <note>ligand shared with subunit alpha</note>
    </ligand>
</feature>
<feature type="binding site" evidence="1">
    <location>
        <begin position="322"/>
        <end position="324"/>
    </location>
    <ligand>
        <name>substrate</name>
        <note>ligand shared with subunit alpha</note>
    </ligand>
</feature>
<dbReference type="EC" id="6.2.1.5" evidence="1"/>
<dbReference type="EMBL" id="AM421808">
    <property type="protein sequence ID" value="CAM10212.1"/>
    <property type="molecule type" value="Genomic_DNA"/>
</dbReference>
<dbReference type="RefSeq" id="WP_002238493.1">
    <property type="nucleotide sequence ID" value="NC_008767.1"/>
</dbReference>
<dbReference type="SMR" id="A1KTM6"/>
<dbReference type="KEGG" id="nmc:NMC0935"/>
<dbReference type="HOGENOM" id="CLU_037430_0_2_4"/>
<dbReference type="UniPathway" id="UPA00223">
    <property type="reaction ID" value="UER00999"/>
</dbReference>
<dbReference type="Proteomes" id="UP000002286">
    <property type="component" value="Chromosome"/>
</dbReference>
<dbReference type="GO" id="GO:0005829">
    <property type="term" value="C:cytosol"/>
    <property type="evidence" value="ECO:0007669"/>
    <property type="project" value="TreeGrafter"/>
</dbReference>
<dbReference type="GO" id="GO:0042709">
    <property type="term" value="C:succinate-CoA ligase complex"/>
    <property type="evidence" value="ECO:0007669"/>
    <property type="project" value="TreeGrafter"/>
</dbReference>
<dbReference type="GO" id="GO:0005524">
    <property type="term" value="F:ATP binding"/>
    <property type="evidence" value="ECO:0007669"/>
    <property type="project" value="UniProtKB-UniRule"/>
</dbReference>
<dbReference type="GO" id="GO:0000287">
    <property type="term" value="F:magnesium ion binding"/>
    <property type="evidence" value="ECO:0007669"/>
    <property type="project" value="UniProtKB-UniRule"/>
</dbReference>
<dbReference type="GO" id="GO:0004775">
    <property type="term" value="F:succinate-CoA ligase (ADP-forming) activity"/>
    <property type="evidence" value="ECO:0007669"/>
    <property type="project" value="UniProtKB-UniRule"/>
</dbReference>
<dbReference type="GO" id="GO:0004776">
    <property type="term" value="F:succinate-CoA ligase (GDP-forming) activity"/>
    <property type="evidence" value="ECO:0007669"/>
    <property type="project" value="RHEA"/>
</dbReference>
<dbReference type="GO" id="GO:0006104">
    <property type="term" value="P:succinyl-CoA metabolic process"/>
    <property type="evidence" value="ECO:0007669"/>
    <property type="project" value="TreeGrafter"/>
</dbReference>
<dbReference type="GO" id="GO:0006099">
    <property type="term" value="P:tricarboxylic acid cycle"/>
    <property type="evidence" value="ECO:0007669"/>
    <property type="project" value="UniProtKB-UniRule"/>
</dbReference>
<dbReference type="FunFam" id="3.30.1490.20:FF:000002">
    <property type="entry name" value="Succinate--CoA ligase [ADP-forming] subunit beta"/>
    <property type="match status" value="1"/>
</dbReference>
<dbReference type="FunFam" id="3.30.470.20:FF:000002">
    <property type="entry name" value="Succinate--CoA ligase [ADP-forming] subunit beta"/>
    <property type="match status" value="1"/>
</dbReference>
<dbReference type="FunFam" id="3.40.50.261:FF:000001">
    <property type="entry name" value="Succinate--CoA ligase [ADP-forming] subunit beta"/>
    <property type="match status" value="1"/>
</dbReference>
<dbReference type="Gene3D" id="3.30.1490.20">
    <property type="entry name" value="ATP-grasp fold, A domain"/>
    <property type="match status" value="1"/>
</dbReference>
<dbReference type="Gene3D" id="3.30.470.20">
    <property type="entry name" value="ATP-grasp fold, B domain"/>
    <property type="match status" value="1"/>
</dbReference>
<dbReference type="Gene3D" id="3.40.50.261">
    <property type="entry name" value="Succinyl-CoA synthetase domains"/>
    <property type="match status" value="1"/>
</dbReference>
<dbReference type="HAMAP" id="MF_00558">
    <property type="entry name" value="Succ_CoA_beta"/>
    <property type="match status" value="1"/>
</dbReference>
<dbReference type="InterPro" id="IPR011761">
    <property type="entry name" value="ATP-grasp"/>
</dbReference>
<dbReference type="InterPro" id="IPR013650">
    <property type="entry name" value="ATP-grasp_succ-CoA_synth-type"/>
</dbReference>
<dbReference type="InterPro" id="IPR013815">
    <property type="entry name" value="ATP_grasp_subdomain_1"/>
</dbReference>
<dbReference type="InterPro" id="IPR017866">
    <property type="entry name" value="Succ-CoA_synthase_bsu_CS"/>
</dbReference>
<dbReference type="InterPro" id="IPR005811">
    <property type="entry name" value="SUCC_ACL_C"/>
</dbReference>
<dbReference type="InterPro" id="IPR005809">
    <property type="entry name" value="Succ_CoA_ligase-like_bsu"/>
</dbReference>
<dbReference type="InterPro" id="IPR016102">
    <property type="entry name" value="Succinyl-CoA_synth-like"/>
</dbReference>
<dbReference type="NCBIfam" id="NF001913">
    <property type="entry name" value="PRK00696.1"/>
    <property type="match status" value="1"/>
</dbReference>
<dbReference type="NCBIfam" id="TIGR01016">
    <property type="entry name" value="sucCoAbeta"/>
    <property type="match status" value="1"/>
</dbReference>
<dbReference type="PANTHER" id="PTHR11815:SF10">
    <property type="entry name" value="SUCCINATE--COA LIGASE [GDP-FORMING] SUBUNIT BETA, MITOCHONDRIAL"/>
    <property type="match status" value="1"/>
</dbReference>
<dbReference type="PANTHER" id="PTHR11815">
    <property type="entry name" value="SUCCINYL-COA SYNTHETASE BETA CHAIN"/>
    <property type="match status" value="1"/>
</dbReference>
<dbReference type="Pfam" id="PF08442">
    <property type="entry name" value="ATP-grasp_2"/>
    <property type="match status" value="1"/>
</dbReference>
<dbReference type="Pfam" id="PF00549">
    <property type="entry name" value="Ligase_CoA"/>
    <property type="match status" value="1"/>
</dbReference>
<dbReference type="PIRSF" id="PIRSF001554">
    <property type="entry name" value="SucCS_beta"/>
    <property type="match status" value="1"/>
</dbReference>
<dbReference type="SUPFAM" id="SSF56059">
    <property type="entry name" value="Glutathione synthetase ATP-binding domain-like"/>
    <property type="match status" value="1"/>
</dbReference>
<dbReference type="SUPFAM" id="SSF52210">
    <property type="entry name" value="Succinyl-CoA synthetase domains"/>
    <property type="match status" value="1"/>
</dbReference>
<dbReference type="PROSITE" id="PS50975">
    <property type="entry name" value="ATP_GRASP"/>
    <property type="match status" value="1"/>
</dbReference>
<dbReference type="PROSITE" id="PS01217">
    <property type="entry name" value="SUCCINYL_COA_LIG_3"/>
    <property type="match status" value="1"/>
</dbReference>
<accession>A1KTM6</accession>
<evidence type="ECO:0000255" key="1">
    <source>
        <dbReference type="HAMAP-Rule" id="MF_00558"/>
    </source>
</evidence>
<gene>
    <name evidence="1" type="primary">sucC</name>
    <name type="ordered locus">NMC0935</name>
</gene>